<comment type="function">
    <text evidence="1">Catalyzes the reversible interconversion of serine and glycine with tetrahydrofolate (THF) serving as the one-carbon carrier. This reaction serves as the major source of one-carbon groups required for the biosynthesis of purines, thymidylate, methionine, and other important biomolecules. Also exhibits THF-independent aldolase activity toward beta-hydroxyamino acids, producing glycine and aldehydes, via a retro-aldol mechanism.</text>
</comment>
<comment type="catalytic activity">
    <reaction evidence="1">
        <text>(6R)-5,10-methylene-5,6,7,8-tetrahydrofolate + glycine + H2O = (6S)-5,6,7,8-tetrahydrofolate + L-serine</text>
        <dbReference type="Rhea" id="RHEA:15481"/>
        <dbReference type="ChEBI" id="CHEBI:15377"/>
        <dbReference type="ChEBI" id="CHEBI:15636"/>
        <dbReference type="ChEBI" id="CHEBI:33384"/>
        <dbReference type="ChEBI" id="CHEBI:57305"/>
        <dbReference type="ChEBI" id="CHEBI:57453"/>
        <dbReference type="EC" id="2.1.2.1"/>
    </reaction>
</comment>
<comment type="cofactor">
    <cofactor evidence="1">
        <name>pyridoxal 5'-phosphate</name>
        <dbReference type="ChEBI" id="CHEBI:597326"/>
    </cofactor>
</comment>
<comment type="pathway">
    <text evidence="1">One-carbon metabolism; tetrahydrofolate interconversion.</text>
</comment>
<comment type="pathway">
    <text evidence="1">Amino-acid biosynthesis; glycine biosynthesis; glycine from L-serine: step 1/1.</text>
</comment>
<comment type="subunit">
    <text evidence="1">Homodimer.</text>
</comment>
<comment type="subcellular location">
    <subcellularLocation>
        <location evidence="1">Cytoplasm</location>
    </subcellularLocation>
</comment>
<comment type="similarity">
    <text evidence="1">Belongs to the SHMT family.</text>
</comment>
<accession>Q3IZN2</accession>
<keyword id="KW-0028">Amino-acid biosynthesis</keyword>
<keyword id="KW-0963">Cytoplasm</keyword>
<keyword id="KW-0554">One-carbon metabolism</keyword>
<keyword id="KW-0663">Pyridoxal phosphate</keyword>
<keyword id="KW-1185">Reference proteome</keyword>
<keyword id="KW-0808">Transferase</keyword>
<protein>
    <recommendedName>
        <fullName evidence="1">Serine hydroxymethyltransferase</fullName>
        <shortName evidence="1">SHMT</shortName>
        <shortName evidence="1">Serine methylase</shortName>
        <ecNumber evidence="1">2.1.2.1</ecNumber>
    </recommendedName>
</protein>
<reference key="1">
    <citation type="submission" date="2005-09" db="EMBL/GenBank/DDBJ databases">
        <title>Complete sequence of chromosome 1 of Rhodobacter sphaeroides 2.4.1.</title>
        <authorList>
            <person name="Copeland A."/>
            <person name="Lucas S."/>
            <person name="Lapidus A."/>
            <person name="Barry K."/>
            <person name="Detter J.C."/>
            <person name="Glavina T."/>
            <person name="Hammon N."/>
            <person name="Israni S."/>
            <person name="Pitluck S."/>
            <person name="Richardson P."/>
            <person name="Mackenzie C."/>
            <person name="Choudhary M."/>
            <person name="Larimer F."/>
            <person name="Hauser L.J."/>
            <person name="Land M."/>
            <person name="Donohue T.J."/>
            <person name="Kaplan S."/>
        </authorList>
    </citation>
    <scope>NUCLEOTIDE SEQUENCE [LARGE SCALE GENOMIC DNA]</scope>
    <source>
        <strain>ATCC 17023 / DSM 158 / JCM 6121 / CCUG 31486 / LMG 2827 / NBRC 12203 / NCIMB 8253 / ATH 2.4.1.</strain>
    </source>
</reference>
<feature type="chain" id="PRO_0000235014" description="Serine hydroxymethyltransferase">
    <location>
        <begin position="1"/>
        <end position="431"/>
    </location>
</feature>
<feature type="binding site" evidence="1">
    <location>
        <position position="128"/>
    </location>
    <ligand>
        <name>(6S)-5,6,7,8-tetrahydrofolate</name>
        <dbReference type="ChEBI" id="CHEBI:57453"/>
    </ligand>
</feature>
<feature type="binding site" evidence="1">
    <location>
        <begin position="132"/>
        <end position="134"/>
    </location>
    <ligand>
        <name>(6S)-5,6,7,8-tetrahydrofolate</name>
        <dbReference type="ChEBI" id="CHEBI:57453"/>
    </ligand>
</feature>
<feature type="binding site" evidence="1">
    <location>
        <position position="253"/>
    </location>
    <ligand>
        <name>(6S)-5,6,7,8-tetrahydrofolate</name>
        <dbReference type="ChEBI" id="CHEBI:57453"/>
    </ligand>
</feature>
<feature type="site" description="Plays an important role in substrate specificity" evidence="1">
    <location>
        <position position="236"/>
    </location>
</feature>
<feature type="modified residue" description="N6-(pyridoxal phosphate)lysine" evidence="1">
    <location>
        <position position="237"/>
    </location>
</feature>
<gene>
    <name evidence="1" type="primary">glyA</name>
    <name type="ordered locus">RHOS4_24340</name>
    <name type="ordered locus">RSP_0823</name>
</gene>
<dbReference type="EC" id="2.1.2.1" evidence="1"/>
<dbReference type="EMBL" id="CP000143">
    <property type="protein sequence ID" value="ABA80002.1"/>
    <property type="molecule type" value="Genomic_DNA"/>
</dbReference>
<dbReference type="RefSeq" id="WP_011338519.1">
    <property type="nucleotide sequence ID" value="NC_007493.2"/>
</dbReference>
<dbReference type="RefSeq" id="YP_353903.1">
    <property type="nucleotide sequence ID" value="NC_007493.2"/>
</dbReference>
<dbReference type="SMR" id="Q3IZN2"/>
<dbReference type="STRING" id="272943.RSP_0823"/>
<dbReference type="EnsemblBacteria" id="ABA80002">
    <property type="protein sequence ID" value="ABA80002"/>
    <property type="gene ID" value="RSP_0823"/>
</dbReference>
<dbReference type="GeneID" id="3718402"/>
<dbReference type="KEGG" id="rsp:RSP_0823"/>
<dbReference type="PATRIC" id="fig|272943.9.peg.2784"/>
<dbReference type="eggNOG" id="COG0112">
    <property type="taxonomic scope" value="Bacteria"/>
</dbReference>
<dbReference type="OrthoDB" id="9803846at2"/>
<dbReference type="PhylomeDB" id="Q3IZN2"/>
<dbReference type="UniPathway" id="UPA00193"/>
<dbReference type="UniPathway" id="UPA00288">
    <property type="reaction ID" value="UER01023"/>
</dbReference>
<dbReference type="Proteomes" id="UP000002703">
    <property type="component" value="Chromosome 1"/>
</dbReference>
<dbReference type="GO" id="GO:0005829">
    <property type="term" value="C:cytosol"/>
    <property type="evidence" value="ECO:0007669"/>
    <property type="project" value="TreeGrafter"/>
</dbReference>
<dbReference type="GO" id="GO:0004372">
    <property type="term" value="F:glycine hydroxymethyltransferase activity"/>
    <property type="evidence" value="ECO:0007669"/>
    <property type="project" value="UniProtKB-UniRule"/>
</dbReference>
<dbReference type="GO" id="GO:0030170">
    <property type="term" value="F:pyridoxal phosphate binding"/>
    <property type="evidence" value="ECO:0007669"/>
    <property type="project" value="UniProtKB-UniRule"/>
</dbReference>
<dbReference type="GO" id="GO:0019264">
    <property type="term" value="P:glycine biosynthetic process from serine"/>
    <property type="evidence" value="ECO:0007669"/>
    <property type="project" value="UniProtKB-UniRule"/>
</dbReference>
<dbReference type="GO" id="GO:0035999">
    <property type="term" value="P:tetrahydrofolate interconversion"/>
    <property type="evidence" value="ECO:0007669"/>
    <property type="project" value="UniProtKB-UniRule"/>
</dbReference>
<dbReference type="CDD" id="cd00378">
    <property type="entry name" value="SHMT"/>
    <property type="match status" value="1"/>
</dbReference>
<dbReference type="FunFam" id="3.40.640.10:FF:000001">
    <property type="entry name" value="Serine hydroxymethyltransferase"/>
    <property type="match status" value="1"/>
</dbReference>
<dbReference type="Gene3D" id="3.90.1150.10">
    <property type="entry name" value="Aspartate Aminotransferase, domain 1"/>
    <property type="match status" value="1"/>
</dbReference>
<dbReference type="Gene3D" id="3.40.640.10">
    <property type="entry name" value="Type I PLP-dependent aspartate aminotransferase-like (Major domain)"/>
    <property type="match status" value="1"/>
</dbReference>
<dbReference type="HAMAP" id="MF_00051">
    <property type="entry name" value="SHMT"/>
    <property type="match status" value="1"/>
</dbReference>
<dbReference type="InterPro" id="IPR015424">
    <property type="entry name" value="PyrdxlP-dep_Trfase"/>
</dbReference>
<dbReference type="InterPro" id="IPR015421">
    <property type="entry name" value="PyrdxlP-dep_Trfase_major"/>
</dbReference>
<dbReference type="InterPro" id="IPR015422">
    <property type="entry name" value="PyrdxlP-dep_Trfase_small"/>
</dbReference>
<dbReference type="InterPro" id="IPR001085">
    <property type="entry name" value="Ser_HO-MeTrfase"/>
</dbReference>
<dbReference type="InterPro" id="IPR049943">
    <property type="entry name" value="Ser_HO-MeTrfase-like"/>
</dbReference>
<dbReference type="InterPro" id="IPR019798">
    <property type="entry name" value="Ser_HO-MeTrfase_PLP_BS"/>
</dbReference>
<dbReference type="InterPro" id="IPR039429">
    <property type="entry name" value="SHMT-like_dom"/>
</dbReference>
<dbReference type="NCBIfam" id="NF000586">
    <property type="entry name" value="PRK00011.1"/>
    <property type="match status" value="1"/>
</dbReference>
<dbReference type="PANTHER" id="PTHR11680">
    <property type="entry name" value="SERINE HYDROXYMETHYLTRANSFERASE"/>
    <property type="match status" value="1"/>
</dbReference>
<dbReference type="PANTHER" id="PTHR11680:SF35">
    <property type="entry name" value="SERINE HYDROXYMETHYLTRANSFERASE 1"/>
    <property type="match status" value="1"/>
</dbReference>
<dbReference type="Pfam" id="PF00464">
    <property type="entry name" value="SHMT"/>
    <property type="match status" value="1"/>
</dbReference>
<dbReference type="PIRSF" id="PIRSF000412">
    <property type="entry name" value="SHMT"/>
    <property type="match status" value="1"/>
</dbReference>
<dbReference type="SUPFAM" id="SSF53383">
    <property type="entry name" value="PLP-dependent transferases"/>
    <property type="match status" value="1"/>
</dbReference>
<dbReference type="PROSITE" id="PS00096">
    <property type="entry name" value="SHMT"/>
    <property type="match status" value="1"/>
</dbReference>
<name>GLYA_CERS4</name>
<organism>
    <name type="scientific">Cereibacter sphaeroides (strain ATCC 17023 / DSM 158 / JCM 6121 / CCUG 31486 / LMG 2827 / NBRC 12203 / NCIMB 8253 / ATH 2.4.1.)</name>
    <name type="common">Rhodobacter sphaeroides</name>
    <dbReference type="NCBI Taxonomy" id="272943"/>
    <lineage>
        <taxon>Bacteria</taxon>
        <taxon>Pseudomonadati</taxon>
        <taxon>Pseudomonadota</taxon>
        <taxon>Alphaproteobacteria</taxon>
        <taxon>Rhodobacterales</taxon>
        <taxon>Paracoccaceae</taxon>
        <taxon>Cereibacter</taxon>
    </lineage>
</organism>
<evidence type="ECO:0000255" key="1">
    <source>
        <dbReference type="HAMAP-Rule" id="MF_00051"/>
    </source>
</evidence>
<sequence length="431" mass="45734">MNAPHRDDGFFTESLSSRDPELFASITGELGRQRDEIELIASENIVSRAVMEAQGSVMTNKYAEGYAGKRYYGGCDYVDVAETLAIERAKQLFGCAYVNVQPNSGSQANQGVFQALIKPGDTILGMELASGGHLTHGAAPNQSGKWFNAIQYGVRQQDQLIDYDQVAALAREHKPKLIIAGGSAIPRQIDFARFRAIADEVGALLMVDMAHFAGLVAGGAHPSPFPHADVATTTTHKTLRGPRGGMILTNSEEIAKKVNSAIFPGIQGGPLMHVIAAKAVAFGEALRPEFKAYAAQVVKNAQALADELMKGGLDIVTGGTDTHLMLVDLRPKGVKGNATEKALGRAHITCNKNGIPFDPEKPTVTSGVRLGTPAGTTRGFGEAEFREIGRLIVEVVDGLAANGEEGNAAVEEAVKAKVAALCARFPLYPTL</sequence>
<proteinExistence type="inferred from homology"/>